<reference key="1">
    <citation type="journal article" date="2000" name="Proc. Natl. Acad. Sci. U.S.A.">
        <title>Archaeal adaptation to higher temperatures revealed by genomic sequence of Thermoplasma volcanium.</title>
        <authorList>
            <person name="Kawashima T."/>
            <person name="Amano N."/>
            <person name="Koike H."/>
            <person name="Makino S."/>
            <person name="Higuchi S."/>
            <person name="Kawashima-Ohya Y."/>
            <person name="Watanabe K."/>
            <person name="Yamazaki M."/>
            <person name="Kanehori K."/>
            <person name="Kawamoto T."/>
            <person name="Nunoshiba T."/>
            <person name="Yamamoto Y."/>
            <person name="Aramaki H."/>
            <person name="Makino K."/>
            <person name="Suzuki M."/>
        </authorList>
    </citation>
    <scope>NUCLEOTIDE SEQUENCE [LARGE SCALE GENOMIC DNA]</scope>
    <source>
        <strain>ATCC 51530 / DSM 4299 / JCM 9571 / NBRC 15438 / GSS1</strain>
    </source>
</reference>
<comment type="catalytic activity">
    <reaction evidence="1">
        <text>L-histidine = trans-urocanate + NH4(+)</text>
        <dbReference type="Rhea" id="RHEA:21232"/>
        <dbReference type="ChEBI" id="CHEBI:17771"/>
        <dbReference type="ChEBI" id="CHEBI:28938"/>
        <dbReference type="ChEBI" id="CHEBI:57595"/>
        <dbReference type="EC" id="4.3.1.3"/>
    </reaction>
</comment>
<comment type="pathway">
    <text evidence="1">Amino-acid degradation; L-histidine degradation into L-glutamate; N-formimidoyl-L-glutamate from L-histidine: step 1/3.</text>
</comment>
<comment type="subcellular location">
    <subcellularLocation>
        <location evidence="1">Cytoplasm</location>
    </subcellularLocation>
</comment>
<comment type="PTM">
    <text evidence="1">Contains an active site 4-methylidene-imidazol-5-one (MIO), which is formed autocatalytically by cyclization and dehydration of residues Ala-Ser-Gly.</text>
</comment>
<comment type="similarity">
    <text evidence="1">Belongs to the PAL/histidase family.</text>
</comment>
<dbReference type="EC" id="4.3.1.3" evidence="1"/>
<dbReference type="EMBL" id="BA000011">
    <property type="protein sequence ID" value="BAB60519.1"/>
    <property type="molecule type" value="Genomic_DNA"/>
</dbReference>
<dbReference type="RefSeq" id="WP_010917611.1">
    <property type="nucleotide sequence ID" value="NC_002689.2"/>
</dbReference>
<dbReference type="SMR" id="Q978N8"/>
<dbReference type="STRING" id="273116.gene:9382185"/>
<dbReference type="PaxDb" id="273116-14325616"/>
<dbReference type="GeneID" id="1442069"/>
<dbReference type="KEGG" id="tvo:TVG1425265"/>
<dbReference type="eggNOG" id="arCOG04671">
    <property type="taxonomic scope" value="Archaea"/>
</dbReference>
<dbReference type="HOGENOM" id="CLU_014801_4_0_2"/>
<dbReference type="OrthoDB" id="27422at2157"/>
<dbReference type="PhylomeDB" id="Q978N8"/>
<dbReference type="UniPathway" id="UPA00379">
    <property type="reaction ID" value="UER00549"/>
</dbReference>
<dbReference type="Proteomes" id="UP000001017">
    <property type="component" value="Chromosome"/>
</dbReference>
<dbReference type="GO" id="GO:0005737">
    <property type="term" value="C:cytoplasm"/>
    <property type="evidence" value="ECO:0007669"/>
    <property type="project" value="UniProtKB-SubCell"/>
</dbReference>
<dbReference type="GO" id="GO:0004397">
    <property type="term" value="F:histidine ammonia-lyase activity"/>
    <property type="evidence" value="ECO:0007669"/>
    <property type="project" value="UniProtKB-UniRule"/>
</dbReference>
<dbReference type="GO" id="GO:0019556">
    <property type="term" value="P:L-histidine catabolic process to glutamate and formamide"/>
    <property type="evidence" value="ECO:0007669"/>
    <property type="project" value="UniProtKB-UniPathway"/>
</dbReference>
<dbReference type="GO" id="GO:0019557">
    <property type="term" value="P:L-histidine catabolic process to glutamate and formate"/>
    <property type="evidence" value="ECO:0007669"/>
    <property type="project" value="UniProtKB-UniPathway"/>
</dbReference>
<dbReference type="CDD" id="cd00332">
    <property type="entry name" value="PAL-HAL"/>
    <property type="match status" value="1"/>
</dbReference>
<dbReference type="FunFam" id="1.10.275.10:FF:000005">
    <property type="entry name" value="Histidine ammonia-lyase"/>
    <property type="match status" value="1"/>
</dbReference>
<dbReference type="FunFam" id="1.20.200.10:FF:000003">
    <property type="entry name" value="Histidine ammonia-lyase"/>
    <property type="match status" value="1"/>
</dbReference>
<dbReference type="Gene3D" id="1.20.200.10">
    <property type="entry name" value="Fumarase/aspartase (Central domain)"/>
    <property type="match status" value="1"/>
</dbReference>
<dbReference type="Gene3D" id="1.10.275.10">
    <property type="entry name" value="Fumarase/aspartase (N-terminal domain)"/>
    <property type="match status" value="1"/>
</dbReference>
<dbReference type="HAMAP" id="MF_00229">
    <property type="entry name" value="His_ammonia_lyase"/>
    <property type="match status" value="1"/>
</dbReference>
<dbReference type="InterPro" id="IPR001106">
    <property type="entry name" value="Aromatic_Lyase"/>
</dbReference>
<dbReference type="InterPro" id="IPR024083">
    <property type="entry name" value="Fumarase/histidase_N"/>
</dbReference>
<dbReference type="InterPro" id="IPR005921">
    <property type="entry name" value="HutH"/>
</dbReference>
<dbReference type="InterPro" id="IPR008948">
    <property type="entry name" value="L-Aspartase-like"/>
</dbReference>
<dbReference type="InterPro" id="IPR022313">
    <property type="entry name" value="Phe/His_NH3-lyase_AS"/>
</dbReference>
<dbReference type="NCBIfam" id="TIGR01225">
    <property type="entry name" value="hutH"/>
    <property type="match status" value="1"/>
</dbReference>
<dbReference type="NCBIfam" id="NF006871">
    <property type="entry name" value="PRK09367.1"/>
    <property type="match status" value="1"/>
</dbReference>
<dbReference type="PANTHER" id="PTHR10362">
    <property type="entry name" value="HISTIDINE AMMONIA-LYASE"/>
    <property type="match status" value="1"/>
</dbReference>
<dbReference type="Pfam" id="PF00221">
    <property type="entry name" value="Lyase_aromatic"/>
    <property type="match status" value="1"/>
</dbReference>
<dbReference type="SUPFAM" id="SSF48557">
    <property type="entry name" value="L-aspartase-like"/>
    <property type="match status" value="1"/>
</dbReference>
<dbReference type="PROSITE" id="PS00488">
    <property type="entry name" value="PAL_HISTIDASE"/>
    <property type="match status" value="1"/>
</dbReference>
<accession>Q978N8</accession>
<protein>
    <recommendedName>
        <fullName evidence="1">Probable histidine ammonia-lyase</fullName>
        <shortName evidence="1">Histidase</shortName>
        <ecNumber evidence="1">4.3.1.3</ecNumber>
    </recommendedName>
</protein>
<sequence>MIEIDGDNLTLEDVYSVSVLHEPVELSTKARNKVAEIHRKFLDLISSGQTIYGVNTGFGGLLNIKISREEEIELQRNLIRSHSAGVGKYLPTDVVRSIMVIRANTLAKGYSAVSTELIDALLAMINKDVVPAVPEFGSVGASGDLAPLAHIGLAMMGEGQAFLNGELMRSDIALSKVGLKPYEFKEKEGVALINGTSMMAGIMALVTSRAYRTIENAVRSSLLSFEALRGTSKAFSDWIVSARPHLGQIAIAEKMRKYLAGSKNVEKSDKEKVQDAYTLRCIPQVYGAVLDTLEYVSSVLVTEINSATDNPLFNGKEVVSGGNFHGEPIALAADFLSIALTDMGNMIERRIARLVDTNLSGLPPFLVKNSGLNSGYMIPQYTAAALCNRNKVLSYPSSADSIPTSANQEDHVSMGSTSTLKLLEIEENLEYIVAIEFLLGAQALEFSQDPISPVTKAIYTKIREYVKPLDKDRPSYLDIEKIREIMNKNELINAA</sequence>
<proteinExistence type="inferred from homology"/>
<evidence type="ECO:0000255" key="1">
    <source>
        <dbReference type="HAMAP-Rule" id="MF_00229"/>
    </source>
</evidence>
<gene>
    <name evidence="1" type="primary">hutH</name>
    <name type="ordered locus">TV1377</name>
    <name type="ORF">TVG1425265</name>
</gene>
<keyword id="KW-0963">Cytoplasm</keyword>
<keyword id="KW-0369">Histidine metabolism</keyword>
<keyword id="KW-0456">Lyase</keyword>
<organism>
    <name type="scientific">Thermoplasma volcanium (strain ATCC 51530 / DSM 4299 / JCM 9571 / NBRC 15438 / GSS1)</name>
    <dbReference type="NCBI Taxonomy" id="273116"/>
    <lineage>
        <taxon>Archaea</taxon>
        <taxon>Methanobacteriati</taxon>
        <taxon>Thermoplasmatota</taxon>
        <taxon>Thermoplasmata</taxon>
        <taxon>Thermoplasmatales</taxon>
        <taxon>Thermoplasmataceae</taxon>
        <taxon>Thermoplasma</taxon>
    </lineage>
</organism>
<feature type="chain" id="PRO_0000161057" description="Probable histidine ammonia-lyase">
    <location>
        <begin position="1"/>
        <end position="495"/>
    </location>
</feature>
<feature type="modified residue" description="2,3-didehydroalanine (Ser)" evidence="1">
    <location>
        <position position="142"/>
    </location>
</feature>
<feature type="cross-link" description="5-imidazolinone (Ala-Gly)" evidence="1">
    <location>
        <begin position="141"/>
        <end position="143"/>
    </location>
</feature>
<name>HUTH_THEVO</name>